<comment type="function">
    <text evidence="1">Heme transporter.</text>
</comment>
<comment type="subcellular location">
    <subcellularLocation>
        <location evidence="4">Membrane</location>
        <topology evidence="4">Multi-pass membrane protein</topology>
    </subcellularLocation>
</comment>
<comment type="induction">
    <text evidence="3">Constitutively expressed. Not regulated by heme level.</text>
</comment>
<comment type="similarity">
    <text evidence="4">Belongs to the HRG family.</text>
</comment>
<dbReference type="EMBL" id="Z68760">
    <property type="protein sequence ID" value="CAE17822.1"/>
    <property type="molecule type" value="Genomic_DNA"/>
</dbReference>
<dbReference type="RefSeq" id="NP_001023184.1">
    <property type="nucleotide sequence ID" value="NM_001028013.2"/>
</dbReference>
<dbReference type="SMR" id="Q7YTM8"/>
<dbReference type="FunCoup" id="Q7YTM8">
    <property type="interactions" value="95"/>
</dbReference>
<dbReference type="STRING" id="6239.F36H1.9.1"/>
<dbReference type="GlyCosmos" id="Q7YTM8">
    <property type="glycosylation" value="2 sites, No reported glycans"/>
</dbReference>
<dbReference type="PaxDb" id="6239-F36H1.9"/>
<dbReference type="EnsemblMetazoa" id="F36H1.9.1">
    <property type="protein sequence ID" value="F36H1.9.1"/>
    <property type="gene ID" value="WBGene00009494"/>
</dbReference>
<dbReference type="EnsemblMetazoa" id="F36H1.9.2">
    <property type="protein sequence ID" value="F36H1.9.2"/>
    <property type="gene ID" value="WBGene00009494"/>
</dbReference>
<dbReference type="GeneID" id="3565185"/>
<dbReference type="KEGG" id="cel:CELE_F36H1.9"/>
<dbReference type="UCSC" id="F36H1.9">
    <property type="organism name" value="c. elegans"/>
</dbReference>
<dbReference type="AGR" id="WB:WBGene00009494"/>
<dbReference type="CTD" id="3565185"/>
<dbReference type="WormBase" id="F36H1.9">
    <property type="protein sequence ID" value="CE34853"/>
    <property type="gene ID" value="WBGene00009494"/>
    <property type="gene designation" value="hrg-5"/>
</dbReference>
<dbReference type="eggNOG" id="ENOG502TJR3">
    <property type="taxonomic scope" value="Eukaryota"/>
</dbReference>
<dbReference type="GeneTree" id="ENSGT00390000002307"/>
<dbReference type="HOGENOM" id="CLU_094341_0_0_1"/>
<dbReference type="InParanoid" id="Q7YTM8"/>
<dbReference type="OMA" id="VACHTLQ"/>
<dbReference type="OrthoDB" id="5826432at2759"/>
<dbReference type="PhylomeDB" id="Q7YTM8"/>
<dbReference type="PRO" id="PR:Q7YTM8"/>
<dbReference type="Proteomes" id="UP000001940">
    <property type="component" value="Chromosome IV"/>
</dbReference>
<dbReference type="Bgee" id="WBGene00009494">
    <property type="expression patterns" value="Expressed in larva and 1 other cell type or tissue"/>
</dbReference>
<dbReference type="GO" id="GO:0005765">
    <property type="term" value="C:lysosomal membrane"/>
    <property type="evidence" value="ECO:0000318"/>
    <property type="project" value="GO_Central"/>
</dbReference>
<dbReference type="GO" id="GO:0005886">
    <property type="term" value="C:plasma membrane"/>
    <property type="evidence" value="ECO:0000318"/>
    <property type="project" value="GO_Central"/>
</dbReference>
<dbReference type="GO" id="GO:0020037">
    <property type="term" value="F:heme binding"/>
    <property type="evidence" value="ECO:0000318"/>
    <property type="project" value="GO_Central"/>
</dbReference>
<dbReference type="GO" id="GO:0015232">
    <property type="term" value="F:heme transmembrane transporter activity"/>
    <property type="evidence" value="ECO:0000318"/>
    <property type="project" value="GO_Central"/>
</dbReference>
<dbReference type="GO" id="GO:0015886">
    <property type="term" value="P:heme transport"/>
    <property type="evidence" value="ECO:0000318"/>
    <property type="project" value="GO_Central"/>
</dbReference>
<dbReference type="InterPro" id="IPR026218">
    <property type="entry name" value="HRG"/>
</dbReference>
<dbReference type="PANTHER" id="PTHR31525:SF4">
    <property type="entry name" value="HEME TRANSPORTER HRG-5"/>
    <property type="match status" value="1"/>
</dbReference>
<dbReference type="PANTHER" id="PTHR31525">
    <property type="entry name" value="HEME TRANSPORTER HRG1"/>
    <property type="match status" value="1"/>
</dbReference>
<dbReference type="PRINTS" id="PR02095">
    <property type="entry name" value="TRNSPORTRHRG"/>
</dbReference>
<gene>
    <name type="primary">hrg-5</name>
    <name type="ORF">F36H1.9</name>
</gene>
<proteinExistence type="evidence at transcript level"/>
<evidence type="ECO:0000250" key="1"/>
<evidence type="ECO:0000255" key="2"/>
<evidence type="ECO:0000269" key="3">
    <source>
    </source>
</evidence>
<evidence type="ECO:0000305" key="4"/>
<feature type="chain" id="PRO_0000348585" description="Heme transporter hrg-5">
    <location>
        <begin position="1"/>
        <end position="160"/>
    </location>
</feature>
<feature type="transmembrane region" description="Helical" evidence="2">
    <location>
        <begin position="21"/>
        <end position="41"/>
    </location>
</feature>
<feature type="transmembrane region" description="Helical" evidence="2">
    <location>
        <begin position="47"/>
        <end position="67"/>
    </location>
</feature>
<feature type="transmembrane region" description="Helical" evidence="2">
    <location>
        <begin position="89"/>
        <end position="109"/>
    </location>
</feature>
<feature type="transmembrane region" description="Helical" evidence="2">
    <location>
        <begin position="123"/>
        <end position="142"/>
    </location>
</feature>
<feature type="glycosylation site" description="N-linked (GlcNAc...) asparagine" evidence="2">
    <location>
        <position position="44"/>
    </location>
</feature>
<feature type="glycosylation site" description="N-linked (GlcNAc...) asparagine" evidence="2">
    <location>
        <position position="144"/>
    </location>
</feature>
<keyword id="KW-0325">Glycoprotein</keyword>
<keyword id="KW-0472">Membrane</keyword>
<keyword id="KW-1185">Reference proteome</keyword>
<keyword id="KW-0812">Transmembrane</keyword>
<keyword id="KW-1133">Transmembrane helix</keyword>
<keyword id="KW-0813">Transport</keyword>
<sequence>MSSKISSSRCCTLFCHVNTRIALTILDILIGFSNILSYAIQFHNWSALTLTAMVTLVACHTLQMFLAEKKNTITHWKYSTFKWIMWIDITLGFLALGCFVVCFIIAGVTEIEFTNLYGENLWFTGLWATAITKYTWQNALLARNYSNQKRILKSEIVEDA</sequence>
<reference key="1">
    <citation type="journal article" date="1998" name="Science">
        <title>Genome sequence of the nematode C. elegans: a platform for investigating biology.</title>
        <authorList>
            <consortium name="The C. elegans sequencing consortium"/>
        </authorList>
    </citation>
    <scope>NUCLEOTIDE SEQUENCE [LARGE SCALE GENOMIC DNA]</scope>
    <source>
        <strain>Bristol N2</strain>
    </source>
</reference>
<reference key="2">
    <citation type="journal article" date="2008" name="Nature">
        <title>Haem homeostasis is regulated by the conserved and concerted functions of HRG-1 proteins.</title>
        <authorList>
            <person name="Rajagopal A."/>
            <person name="Rao A.U."/>
            <person name="Amigo J."/>
            <person name="Tian M."/>
            <person name="Upadhyay S.K."/>
            <person name="Hall C."/>
            <person name="Uhm S."/>
            <person name="Mathew M.K."/>
            <person name="Fleming M.D."/>
            <person name="Paw B.H."/>
            <person name="Krause M."/>
            <person name="Hamza I."/>
        </authorList>
    </citation>
    <scope>INDUCTION</scope>
</reference>
<organism>
    <name type="scientific">Caenorhabditis elegans</name>
    <dbReference type="NCBI Taxonomy" id="6239"/>
    <lineage>
        <taxon>Eukaryota</taxon>
        <taxon>Metazoa</taxon>
        <taxon>Ecdysozoa</taxon>
        <taxon>Nematoda</taxon>
        <taxon>Chromadorea</taxon>
        <taxon>Rhabditida</taxon>
        <taxon>Rhabditina</taxon>
        <taxon>Rhabditomorpha</taxon>
        <taxon>Rhabditoidea</taxon>
        <taxon>Rhabditidae</taxon>
        <taxon>Peloderinae</taxon>
        <taxon>Caenorhabditis</taxon>
    </lineage>
</organism>
<name>HRG5_CAEEL</name>
<accession>Q7YTM8</accession>
<protein>
    <recommendedName>
        <fullName>Heme transporter hrg-5</fullName>
    </recommendedName>
    <alternativeName>
        <fullName>Heme-responsive gene 5 protein</fullName>
        <shortName>CeHRG-5</shortName>
    </alternativeName>
</protein>